<feature type="chain" id="PRO_0000340416" description="Urease accessory protein UreD 1">
    <location>
        <begin position="1"/>
        <end position="278"/>
    </location>
</feature>
<organism>
    <name type="scientific">Bradyrhizobium sp. (strain ORS 278)</name>
    <dbReference type="NCBI Taxonomy" id="114615"/>
    <lineage>
        <taxon>Bacteria</taxon>
        <taxon>Pseudomonadati</taxon>
        <taxon>Pseudomonadota</taxon>
        <taxon>Alphaproteobacteria</taxon>
        <taxon>Hyphomicrobiales</taxon>
        <taxon>Nitrobacteraceae</taxon>
        <taxon>Bradyrhizobium</taxon>
    </lineage>
</organism>
<name>URED1_BRASO</name>
<sequence length="278" mass="29759">MRADPASAAADIFEANRARGAVRFDLRLQDGVTRRHHLHESGSLRVRFPSPEDDGLSAMFVNTAGGIAGGDRFAIEVAAGEGSRVTLSSAAAEKVYRAPGTPAELAIALRAADSAHISWLPQETILFDRARIHRRMDIDLAETASLLLCEIVVFGRTAMGERMREGEFVDRWRLRRGGKLVFAETVRLDGDIGDKLAQPAIANGATAIGTALIVPGDGALVERIRESLPASRGEAGLSAWNGFAMARFCAQDAASLRADMMAVLGCASAVPLPRLWLN</sequence>
<comment type="function">
    <text evidence="1">Required for maturation of urease via the functional incorporation of the urease nickel metallocenter.</text>
</comment>
<comment type="subunit">
    <text evidence="1">UreD, UreF and UreG form a complex that acts as a GTP-hydrolysis-dependent molecular chaperone, activating the urease apoprotein by helping to assemble the nickel containing metallocenter of UreC. The UreE protein probably delivers the nickel.</text>
</comment>
<comment type="subcellular location">
    <subcellularLocation>
        <location evidence="1">Cytoplasm</location>
    </subcellularLocation>
</comment>
<comment type="similarity">
    <text evidence="1">Belongs to the UreD family.</text>
</comment>
<gene>
    <name evidence="1" type="primary">ureD1</name>
    <name type="ordered locus">BRADO1036</name>
</gene>
<protein>
    <recommendedName>
        <fullName evidence="1">Urease accessory protein UreD 1</fullName>
    </recommendedName>
</protein>
<accession>A4YM24</accession>
<proteinExistence type="inferred from homology"/>
<reference key="1">
    <citation type="journal article" date="2007" name="Science">
        <title>Legumes symbioses: absence of nod genes in photosynthetic bradyrhizobia.</title>
        <authorList>
            <person name="Giraud E."/>
            <person name="Moulin L."/>
            <person name="Vallenet D."/>
            <person name="Barbe V."/>
            <person name="Cytryn E."/>
            <person name="Avarre J.-C."/>
            <person name="Jaubert M."/>
            <person name="Simon D."/>
            <person name="Cartieaux F."/>
            <person name="Prin Y."/>
            <person name="Bena G."/>
            <person name="Hannibal L."/>
            <person name="Fardoux J."/>
            <person name="Kojadinovic M."/>
            <person name="Vuillet L."/>
            <person name="Lajus A."/>
            <person name="Cruveiller S."/>
            <person name="Rouy Z."/>
            <person name="Mangenot S."/>
            <person name="Segurens B."/>
            <person name="Dossat C."/>
            <person name="Franck W.L."/>
            <person name="Chang W.-S."/>
            <person name="Saunders E."/>
            <person name="Bruce D."/>
            <person name="Richardson P."/>
            <person name="Normand P."/>
            <person name="Dreyfus B."/>
            <person name="Pignol D."/>
            <person name="Stacey G."/>
            <person name="Emerich D."/>
            <person name="Vermeglio A."/>
            <person name="Medigue C."/>
            <person name="Sadowsky M."/>
        </authorList>
    </citation>
    <scope>NUCLEOTIDE SEQUENCE [LARGE SCALE GENOMIC DNA]</scope>
    <source>
        <strain>ORS 278</strain>
    </source>
</reference>
<dbReference type="EMBL" id="CU234118">
    <property type="protein sequence ID" value="CAL74950.1"/>
    <property type="molecule type" value="Genomic_DNA"/>
</dbReference>
<dbReference type="RefSeq" id="WP_011924199.1">
    <property type="nucleotide sequence ID" value="NC_009445.1"/>
</dbReference>
<dbReference type="SMR" id="A4YM24"/>
<dbReference type="STRING" id="114615.BRADO1036"/>
<dbReference type="KEGG" id="bra:BRADO1036"/>
<dbReference type="eggNOG" id="COG0829">
    <property type="taxonomic scope" value="Bacteria"/>
</dbReference>
<dbReference type="HOGENOM" id="CLU_056339_2_0_5"/>
<dbReference type="OrthoDB" id="9798842at2"/>
<dbReference type="Proteomes" id="UP000001994">
    <property type="component" value="Chromosome"/>
</dbReference>
<dbReference type="GO" id="GO:0005737">
    <property type="term" value="C:cytoplasm"/>
    <property type="evidence" value="ECO:0007669"/>
    <property type="project" value="UniProtKB-SubCell"/>
</dbReference>
<dbReference type="GO" id="GO:0016151">
    <property type="term" value="F:nickel cation binding"/>
    <property type="evidence" value="ECO:0007669"/>
    <property type="project" value="UniProtKB-UniRule"/>
</dbReference>
<dbReference type="HAMAP" id="MF_01384">
    <property type="entry name" value="UreD"/>
    <property type="match status" value="1"/>
</dbReference>
<dbReference type="InterPro" id="IPR002669">
    <property type="entry name" value="UreD"/>
</dbReference>
<dbReference type="PANTHER" id="PTHR33643">
    <property type="entry name" value="UREASE ACCESSORY PROTEIN D"/>
    <property type="match status" value="1"/>
</dbReference>
<dbReference type="PANTHER" id="PTHR33643:SF1">
    <property type="entry name" value="UREASE ACCESSORY PROTEIN D"/>
    <property type="match status" value="1"/>
</dbReference>
<dbReference type="Pfam" id="PF01774">
    <property type="entry name" value="UreD"/>
    <property type="match status" value="1"/>
</dbReference>
<keyword id="KW-0143">Chaperone</keyword>
<keyword id="KW-0963">Cytoplasm</keyword>
<keyword id="KW-0996">Nickel insertion</keyword>
<keyword id="KW-1185">Reference proteome</keyword>
<evidence type="ECO:0000255" key="1">
    <source>
        <dbReference type="HAMAP-Rule" id="MF_01384"/>
    </source>
</evidence>